<name>YORE_BACSU</name>
<feature type="chain" id="PRO_0000360199" description="SPbeta prophage-derived uncharacterized protein YorE">
    <location>
        <begin position="1"/>
        <end position="123"/>
    </location>
</feature>
<sequence length="123" mass="14746">MEVLGITEKALNYYRENVKDNKTITPDQALLKMIRNVLLVKETHPERVKKRLFCTEYAYGNMIIKVNRKKQVFEIVNKSGCFSDQNDWKFPKRRYIELSKELGIKDCKFRKITYSKKNHNKQK</sequence>
<reference key="1">
    <citation type="journal article" date="1997" name="Nature">
        <title>The complete genome sequence of the Gram-positive bacterium Bacillus subtilis.</title>
        <authorList>
            <person name="Kunst F."/>
            <person name="Ogasawara N."/>
            <person name="Moszer I."/>
            <person name="Albertini A.M."/>
            <person name="Alloni G."/>
            <person name="Azevedo V."/>
            <person name="Bertero M.G."/>
            <person name="Bessieres P."/>
            <person name="Bolotin A."/>
            <person name="Borchert S."/>
            <person name="Borriss R."/>
            <person name="Boursier L."/>
            <person name="Brans A."/>
            <person name="Braun M."/>
            <person name="Brignell S.C."/>
            <person name="Bron S."/>
            <person name="Brouillet S."/>
            <person name="Bruschi C.V."/>
            <person name="Caldwell B."/>
            <person name="Capuano V."/>
            <person name="Carter N.M."/>
            <person name="Choi S.-K."/>
            <person name="Codani J.-J."/>
            <person name="Connerton I.F."/>
            <person name="Cummings N.J."/>
            <person name="Daniel R.A."/>
            <person name="Denizot F."/>
            <person name="Devine K.M."/>
            <person name="Duesterhoeft A."/>
            <person name="Ehrlich S.D."/>
            <person name="Emmerson P.T."/>
            <person name="Entian K.-D."/>
            <person name="Errington J."/>
            <person name="Fabret C."/>
            <person name="Ferrari E."/>
            <person name="Foulger D."/>
            <person name="Fritz C."/>
            <person name="Fujita M."/>
            <person name="Fujita Y."/>
            <person name="Fuma S."/>
            <person name="Galizzi A."/>
            <person name="Galleron N."/>
            <person name="Ghim S.-Y."/>
            <person name="Glaser P."/>
            <person name="Goffeau A."/>
            <person name="Golightly E.J."/>
            <person name="Grandi G."/>
            <person name="Guiseppi G."/>
            <person name="Guy B.J."/>
            <person name="Haga K."/>
            <person name="Haiech J."/>
            <person name="Harwood C.R."/>
            <person name="Henaut A."/>
            <person name="Hilbert H."/>
            <person name="Holsappel S."/>
            <person name="Hosono S."/>
            <person name="Hullo M.-F."/>
            <person name="Itaya M."/>
            <person name="Jones L.-M."/>
            <person name="Joris B."/>
            <person name="Karamata D."/>
            <person name="Kasahara Y."/>
            <person name="Klaerr-Blanchard M."/>
            <person name="Klein C."/>
            <person name="Kobayashi Y."/>
            <person name="Koetter P."/>
            <person name="Koningstein G."/>
            <person name="Krogh S."/>
            <person name="Kumano M."/>
            <person name="Kurita K."/>
            <person name="Lapidus A."/>
            <person name="Lardinois S."/>
            <person name="Lauber J."/>
            <person name="Lazarevic V."/>
            <person name="Lee S.-M."/>
            <person name="Levine A."/>
            <person name="Liu H."/>
            <person name="Masuda S."/>
            <person name="Mauel C."/>
            <person name="Medigue C."/>
            <person name="Medina N."/>
            <person name="Mellado R.P."/>
            <person name="Mizuno M."/>
            <person name="Moestl D."/>
            <person name="Nakai S."/>
            <person name="Noback M."/>
            <person name="Noone D."/>
            <person name="O'Reilly M."/>
            <person name="Ogawa K."/>
            <person name="Ogiwara A."/>
            <person name="Oudega B."/>
            <person name="Park S.-H."/>
            <person name="Parro V."/>
            <person name="Pohl T.M."/>
            <person name="Portetelle D."/>
            <person name="Porwollik S."/>
            <person name="Prescott A.M."/>
            <person name="Presecan E."/>
            <person name="Pujic P."/>
            <person name="Purnelle B."/>
            <person name="Rapoport G."/>
            <person name="Rey M."/>
            <person name="Reynolds S."/>
            <person name="Rieger M."/>
            <person name="Rivolta C."/>
            <person name="Rocha E."/>
            <person name="Roche B."/>
            <person name="Rose M."/>
            <person name="Sadaie Y."/>
            <person name="Sato T."/>
            <person name="Scanlan E."/>
            <person name="Schleich S."/>
            <person name="Schroeter R."/>
            <person name="Scoffone F."/>
            <person name="Sekiguchi J."/>
            <person name="Sekowska A."/>
            <person name="Seror S.J."/>
            <person name="Serror P."/>
            <person name="Shin B.-S."/>
            <person name="Soldo B."/>
            <person name="Sorokin A."/>
            <person name="Tacconi E."/>
            <person name="Takagi T."/>
            <person name="Takahashi H."/>
            <person name="Takemaru K."/>
            <person name="Takeuchi M."/>
            <person name="Tamakoshi A."/>
            <person name="Tanaka T."/>
            <person name="Terpstra P."/>
            <person name="Tognoni A."/>
            <person name="Tosato V."/>
            <person name="Uchiyama S."/>
            <person name="Vandenbol M."/>
            <person name="Vannier F."/>
            <person name="Vassarotti A."/>
            <person name="Viari A."/>
            <person name="Wambutt R."/>
            <person name="Wedler E."/>
            <person name="Wedler H."/>
            <person name="Weitzenegger T."/>
            <person name="Winters P."/>
            <person name="Wipat A."/>
            <person name="Yamamoto H."/>
            <person name="Yamane K."/>
            <person name="Yasumoto K."/>
            <person name="Yata K."/>
            <person name="Yoshida K."/>
            <person name="Yoshikawa H.-F."/>
            <person name="Zumstein E."/>
            <person name="Yoshikawa H."/>
            <person name="Danchin A."/>
        </authorList>
    </citation>
    <scope>NUCLEOTIDE SEQUENCE [LARGE SCALE GENOMIC DNA]</scope>
    <source>
        <strain>168</strain>
    </source>
</reference>
<gene>
    <name type="primary">yorE</name>
    <name type="ordered locus">BSU20410</name>
</gene>
<accession>O31909</accession>
<proteinExistence type="predicted"/>
<protein>
    <recommendedName>
        <fullName>SPbeta prophage-derived uncharacterized protein YorE</fullName>
    </recommendedName>
</protein>
<dbReference type="EMBL" id="AL009126">
    <property type="protein sequence ID" value="CAB13933.1"/>
    <property type="molecule type" value="Genomic_DNA"/>
</dbReference>
<dbReference type="RefSeq" id="NP_389923.1">
    <property type="nucleotide sequence ID" value="NC_000964.3"/>
</dbReference>
<dbReference type="RefSeq" id="WP_004399457.1">
    <property type="nucleotide sequence ID" value="NZ_OZ025638.1"/>
</dbReference>
<dbReference type="FunCoup" id="O31909">
    <property type="interactions" value="35"/>
</dbReference>
<dbReference type="STRING" id="224308.BSU20410"/>
<dbReference type="PaxDb" id="224308-BSU20410"/>
<dbReference type="EnsemblBacteria" id="CAB13933">
    <property type="protein sequence ID" value="CAB13933"/>
    <property type="gene ID" value="BSU_20410"/>
</dbReference>
<dbReference type="GeneID" id="940144"/>
<dbReference type="KEGG" id="bsu:BSU20410"/>
<dbReference type="PATRIC" id="fig|224308.179.peg.2231"/>
<dbReference type="InParanoid" id="O31909"/>
<dbReference type="OrthoDB" id="2888528at2"/>
<dbReference type="BioCyc" id="BSUB:BSU20410-MONOMER"/>
<dbReference type="Proteomes" id="UP000001570">
    <property type="component" value="Chromosome"/>
</dbReference>
<keyword id="KW-1185">Reference proteome</keyword>
<organism>
    <name type="scientific">Bacillus subtilis (strain 168)</name>
    <dbReference type="NCBI Taxonomy" id="224308"/>
    <lineage>
        <taxon>Bacteria</taxon>
        <taxon>Bacillati</taxon>
        <taxon>Bacillota</taxon>
        <taxon>Bacilli</taxon>
        <taxon>Bacillales</taxon>
        <taxon>Bacillaceae</taxon>
        <taxon>Bacillus</taxon>
    </lineage>
</organism>